<accession>B8D8Q0</accession>
<feature type="chain" id="PRO_1000149552" description="Ribosome rescue factor SmrB">
    <location>
        <begin position="1"/>
        <end position="186"/>
    </location>
</feature>
<feature type="domain" description="Smr" evidence="1">
    <location>
        <begin position="99"/>
        <end position="174"/>
    </location>
</feature>
<proteinExistence type="inferred from homology"/>
<keyword id="KW-0255">Endonuclease</keyword>
<keyword id="KW-0378">Hydrolase</keyword>
<keyword id="KW-0540">Nuclease</keyword>
<keyword id="KW-0694">RNA-binding</keyword>
<keyword id="KW-0699">rRNA-binding</keyword>
<gene>
    <name evidence="1" type="primary">smrB</name>
    <name type="ordered locus">BUAP5A_096</name>
</gene>
<organism>
    <name type="scientific">Buchnera aphidicola subsp. Acyrthosiphon pisum (strain 5A)</name>
    <dbReference type="NCBI Taxonomy" id="563178"/>
    <lineage>
        <taxon>Bacteria</taxon>
        <taxon>Pseudomonadati</taxon>
        <taxon>Pseudomonadota</taxon>
        <taxon>Gammaproteobacteria</taxon>
        <taxon>Enterobacterales</taxon>
        <taxon>Erwiniaceae</taxon>
        <taxon>Buchnera</taxon>
    </lineage>
</organism>
<name>SMRB_BUCA5</name>
<evidence type="ECO:0000255" key="1">
    <source>
        <dbReference type="HAMAP-Rule" id="MF_01042"/>
    </source>
</evidence>
<reference key="1">
    <citation type="journal article" date="2009" name="Science">
        <title>The dynamics and time scale of ongoing genomic erosion in symbiotic bacteria.</title>
        <authorList>
            <person name="Moran N.A."/>
            <person name="McLaughlin H.J."/>
            <person name="Sorek R."/>
        </authorList>
    </citation>
    <scope>NUCLEOTIDE SEQUENCE [LARGE SCALE GENOMIC DNA]</scope>
    <source>
        <strain>5A</strain>
    </source>
</reference>
<sequence>MDKNSRYTVDSSILFRQWLNDTREMVQDTIFHSRIQKKNNNHPVSQRVFFEQNAHSHYFSYRNNKNLFKENPVSYIRHQSLYNVLKNLKKGRYNPDISIDLHGLTQHQAQQALGELITTCQKEKIFCAHIMHGHGKHILKKQTPFWLSQHPDIIAFHEAPKFFGSDAAIIVIIEINSLKKNINIFN</sequence>
<protein>
    <recommendedName>
        <fullName evidence="1">Ribosome rescue factor SmrB</fullName>
        <ecNumber evidence="1">3.1.-.-</ecNumber>
    </recommendedName>
</protein>
<dbReference type="EC" id="3.1.-.-" evidence="1"/>
<dbReference type="EMBL" id="CP001161">
    <property type="protein sequence ID" value="ACL30472.1"/>
    <property type="molecule type" value="Genomic_DNA"/>
</dbReference>
<dbReference type="RefSeq" id="WP_009874053.1">
    <property type="nucleotide sequence ID" value="NC_011833.1"/>
</dbReference>
<dbReference type="SMR" id="B8D8Q0"/>
<dbReference type="KEGG" id="bap:BUAP5A_096"/>
<dbReference type="HOGENOM" id="CLU_055978_4_0_6"/>
<dbReference type="OrthoDB" id="5795446at2"/>
<dbReference type="Proteomes" id="UP000006904">
    <property type="component" value="Chromosome"/>
</dbReference>
<dbReference type="GO" id="GO:0004521">
    <property type="term" value="F:RNA endonuclease activity"/>
    <property type="evidence" value="ECO:0007669"/>
    <property type="project" value="UniProtKB-UniRule"/>
</dbReference>
<dbReference type="GO" id="GO:0019843">
    <property type="term" value="F:rRNA binding"/>
    <property type="evidence" value="ECO:0007669"/>
    <property type="project" value="UniProtKB-UniRule"/>
</dbReference>
<dbReference type="GO" id="GO:0072344">
    <property type="term" value="P:rescue of stalled ribosome"/>
    <property type="evidence" value="ECO:0007669"/>
    <property type="project" value="UniProtKB-UniRule"/>
</dbReference>
<dbReference type="Gene3D" id="3.30.1370.110">
    <property type="match status" value="1"/>
</dbReference>
<dbReference type="HAMAP" id="MF_01042">
    <property type="entry name" value="SmrB"/>
    <property type="match status" value="1"/>
</dbReference>
<dbReference type="InterPro" id="IPR002625">
    <property type="entry name" value="Smr_dom"/>
</dbReference>
<dbReference type="InterPro" id="IPR036063">
    <property type="entry name" value="Smr_dom_sf"/>
</dbReference>
<dbReference type="InterPro" id="IPR022990">
    <property type="entry name" value="SmrB-like"/>
</dbReference>
<dbReference type="NCBIfam" id="NF003432">
    <property type="entry name" value="PRK04946.1"/>
    <property type="match status" value="1"/>
</dbReference>
<dbReference type="PANTHER" id="PTHR35562">
    <property type="entry name" value="DNA ENDONUCLEASE SMRA-RELATED"/>
    <property type="match status" value="1"/>
</dbReference>
<dbReference type="PANTHER" id="PTHR35562:SF1">
    <property type="entry name" value="UPF0115 PROTEIN YFCN"/>
    <property type="match status" value="1"/>
</dbReference>
<dbReference type="Pfam" id="PF01713">
    <property type="entry name" value="Smr"/>
    <property type="match status" value="1"/>
</dbReference>
<dbReference type="SMART" id="SM00463">
    <property type="entry name" value="SMR"/>
    <property type="match status" value="1"/>
</dbReference>
<dbReference type="SUPFAM" id="SSF160443">
    <property type="entry name" value="SMR domain-like"/>
    <property type="match status" value="1"/>
</dbReference>
<dbReference type="PROSITE" id="PS50828">
    <property type="entry name" value="SMR"/>
    <property type="match status" value="1"/>
</dbReference>
<comment type="function">
    <text evidence="1">Acts as a ribosome collision sensor. Detects stalled/collided disomes (pairs of ribosomes where the leading ribosome is stalled and a second ribosome has collided with it) and endonucleolytically cleaves mRNA at the 5' boundary of the stalled ribosome. Stalled/collided disomes form a new interface (primarily via the 30S subunits) that binds SmrB. Cleaved mRNA becomes available for tmRNA ligation, leading to ribosomal subunit dissociation and rescue of stalled ribosomes.</text>
</comment>
<comment type="subunit">
    <text evidence="1">Associates with collided ribosomes, but not with correctly translating polysomes.</text>
</comment>
<comment type="similarity">
    <text evidence="1">Belongs to the SmrB family.</text>
</comment>